<evidence type="ECO:0000250" key="1"/>
<evidence type="ECO:0000250" key="2">
    <source>
        <dbReference type="UniProtKB" id="P40039"/>
    </source>
</evidence>
<evidence type="ECO:0000255" key="3"/>
<evidence type="ECO:0000305" key="4"/>
<organism>
    <name type="scientific">Saccharomyces cerevisiae (strain ATCC 204508 / S288c)</name>
    <name type="common">Baker's yeast</name>
    <dbReference type="NCBI Taxonomy" id="559292"/>
    <lineage>
        <taxon>Eukaryota</taxon>
        <taxon>Fungi</taxon>
        <taxon>Dikarya</taxon>
        <taxon>Ascomycota</taxon>
        <taxon>Saccharomycotina</taxon>
        <taxon>Saccharomycetes</taxon>
        <taxon>Saccharomycetales</taxon>
        <taxon>Saccharomycetaceae</taxon>
        <taxon>Saccharomyces</taxon>
    </lineage>
</organism>
<gene>
    <name type="primary">FCY22</name>
    <name type="synonym">FCYX</name>
    <name type="ordered locus">YER060W-A</name>
</gene>
<dbReference type="EMBL" id="X97346">
    <property type="protein sequence ID" value="CAA66033.1"/>
    <property type="molecule type" value="Genomic_DNA"/>
</dbReference>
<dbReference type="EMBL" id="U18813">
    <property type="protein sequence ID" value="AAB64610.1"/>
    <property type="molecule type" value="Genomic_DNA"/>
</dbReference>
<dbReference type="EMBL" id="BK006939">
    <property type="protein sequence ID" value="DAA07719.1"/>
    <property type="molecule type" value="Genomic_DNA"/>
</dbReference>
<dbReference type="RefSeq" id="NP_010982.1">
    <property type="nucleotide sequence ID" value="NM_001180858.1"/>
</dbReference>
<dbReference type="BioGRID" id="36802">
    <property type="interactions" value="104"/>
</dbReference>
<dbReference type="DIP" id="DIP-8900N"/>
<dbReference type="FunCoup" id="Q12119">
    <property type="interactions" value="41"/>
</dbReference>
<dbReference type="STRING" id="4932.YER060W-A"/>
<dbReference type="iPTMnet" id="Q12119"/>
<dbReference type="PaxDb" id="4932-YER060W-A"/>
<dbReference type="PeptideAtlas" id="Q12119"/>
<dbReference type="EnsemblFungi" id="YER060W-A_mRNA">
    <property type="protein sequence ID" value="YER060W-A"/>
    <property type="gene ID" value="YER060W-A"/>
</dbReference>
<dbReference type="GeneID" id="856789"/>
<dbReference type="KEGG" id="sce:YER060W-A"/>
<dbReference type="AGR" id="SGD:S000002958"/>
<dbReference type="SGD" id="S000002958">
    <property type="gene designation" value="FCY22"/>
</dbReference>
<dbReference type="VEuPathDB" id="FungiDB:YER060W-A"/>
<dbReference type="eggNOG" id="ENOG502QQ8Y">
    <property type="taxonomic scope" value="Eukaryota"/>
</dbReference>
<dbReference type="GeneTree" id="ENSGT00940000176331"/>
<dbReference type="HOGENOM" id="CLU_026016_2_2_1"/>
<dbReference type="InParanoid" id="Q12119"/>
<dbReference type="OMA" id="GRWANYE"/>
<dbReference type="OrthoDB" id="2116389at2759"/>
<dbReference type="BioCyc" id="YEAST:G3O-30354-MONOMER"/>
<dbReference type="BioGRID-ORCS" id="856789">
    <property type="hits" value="0 hits in 10 CRISPR screens"/>
</dbReference>
<dbReference type="PRO" id="PR:Q12119"/>
<dbReference type="Proteomes" id="UP000002311">
    <property type="component" value="Chromosome V"/>
</dbReference>
<dbReference type="RNAct" id="Q12119">
    <property type="molecule type" value="protein"/>
</dbReference>
<dbReference type="GO" id="GO:0071944">
    <property type="term" value="C:cell periphery"/>
    <property type="evidence" value="ECO:0007005"/>
    <property type="project" value="SGD"/>
</dbReference>
<dbReference type="GO" id="GO:0000324">
    <property type="term" value="C:fungal-type vacuole"/>
    <property type="evidence" value="ECO:0007005"/>
    <property type="project" value="SGD"/>
</dbReference>
<dbReference type="GO" id="GO:0005886">
    <property type="term" value="C:plasma membrane"/>
    <property type="evidence" value="ECO:0000247"/>
    <property type="project" value="SGD"/>
</dbReference>
<dbReference type="GO" id="GO:0015205">
    <property type="term" value="F:nucleobase transmembrane transporter activity"/>
    <property type="evidence" value="ECO:0000315"/>
    <property type="project" value="SGD"/>
</dbReference>
<dbReference type="GO" id="GO:0015856">
    <property type="term" value="P:cytosine transport"/>
    <property type="evidence" value="ECO:0000315"/>
    <property type="project" value="SGD"/>
</dbReference>
<dbReference type="GO" id="GO:0072530">
    <property type="term" value="P:purine-containing compound transmembrane transport"/>
    <property type="evidence" value="ECO:0000247"/>
    <property type="project" value="SGD"/>
</dbReference>
<dbReference type="CDD" id="cd11484">
    <property type="entry name" value="SLC-NCS1sbd_CobB-like"/>
    <property type="match status" value="1"/>
</dbReference>
<dbReference type="FunFam" id="1.10.4160.10:FF:000002">
    <property type="entry name" value="Purine-cytosine permease fcyB"/>
    <property type="match status" value="1"/>
</dbReference>
<dbReference type="Gene3D" id="1.10.4160.10">
    <property type="entry name" value="Hydantoin permease"/>
    <property type="match status" value="1"/>
</dbReference>
<dbReference type="InterPro" id="IPR012681">
    <property type="entry name" value="NCS1"/>
</dbReference>
<dbReference type="InterPro" id="IPR001248">
    <property type="entry name" value="Pur-cyt_permease"/>
</dbReference>
<dbReference type="InterPro" id="IPR026030">
    <property type="entry name" value="Pur-cyt_permease_Fcy2/21/22"/>
</dbReference>
<dbReference type="NCBIfam" id="TIGR00800">
    <property type="entry name" value="ncs1"/>
    <property type="match status" value="1"/>
</dbReference>
<dbReference type="PANTHER" id="PTHR31806">
    <property type="entry name" value="PURINE-CYTOSINE PERMEASE FCY2-RELATED"/>
    <property type="match status" value="1"/>
</dbReference>
<dbReference type="PANTHER" id="PTHR31806:SF1">
    <property type="entry name" value="PURINE-CYTOSINE PERMEASE FCY2-RELATED"/>
    <property type="match status" value="1"/>
</dbReference>
<dbReference type="Pfam" id="PF02133">
    <property type="entry name" value="Transp_cyt_pur"/>
    <property type="match status" value="1"/>
</dbReference>
<dbReference type="PIRSF" id="PIRSF002744">
    <property type="entry name" value="Pur-cyt_permease"/>
    <property type="match status" value="1"/>
</dbReference>
<feature type="chain" id="PRO_0000197922" description="Purine-cytosine permease FCY22">
    <location>
        <begin position="1"/>
        <end position="530"/>
    </location>
</feature>
<feature type="transmembrane region" description="Helical" evidence="3">
    <location>
        <begin position="96"/>
        <end position="116"/>
    </location>
</feature>
<feature type="transmembrane region" description="Helical" evidence="3">
    <location>
        <begin position="119"/>
        <end position="139"/>
    </location>
</feature>
<feature type="transmembrane region" description="Helical" evidence="3">
    <location>
        <begin position="162"/>
        <end position="182"/>
    </location>
</feature>
<feature type="transmembrane region" description="Helical" evidence="3">
    <location>
        <begin position="197"/>
        <end position="217"/>
    </location>
</feature>
<feature type="transmembrane region" description="Helical" evidence="3">
    <location>
        <begin position="220"/>
        <end position="240"/>
    </location>
</feature>
<feature type="transmembrane region" description="Helical" evidence="3">
    <location>
        <begin position="263"/>
        <end position="283"/>
    </location>
</feature>
<feature type="transmembrane region" description="Helical" evidence="3">
    <location>
        <begin position="298"/>
        <end position="318"/>
    </location>
</feature>
<feature type="transmembrane region" description="Helical" evidence="3">
    <location>
        <begin position="345"/>
        <end position="365"/>
    </location>
</feature>
<feature type="transmembrane region" description="Helical" evidence="3">
    <location>
        <begin position="372"/>
        <end position="392"/>
    </location>
</feature>
<feature type="transmembrane region" description="Helical" evidence="3">
    <location>
        <begin position="396"/>
        <end position="416"/>
    </location>
</feature>
<feature type="transmembrane region" description="Helical" evidence="3">
    <location>
        <begin position="418"/>
        <end position="438"/>
    </location>
</feature>
<feature type="transmembrane region" description="Helical" evidence="3">
    <location>
        <begin position="463"/>
        <end position="483"/>
    </location>
</feature>
<feature type="modified residue" description="Phosphothreonine" evidence="2">
    <location>
        <position position="46"/>
    </location>
</feature>
<comment type="function">
    <text evidence="1">Probable purine-cytosine permease.</text>
</comment>
<comment type="subcellular location">
    <subcellularLocation>
        <location evidence="4">Membrane</location>
        <topology evidence="4">Multi-pass membrane protein</topology>
    </subcellularLocation>
</comment>
<comment type="similarity">
    <text evidence="4">Belongs to the purine-cytosine permease (2.A.39) family.</text>
</comment>
<reference key="1">
    <citation type="submission" date="1996-04" db="EMBL/GenBank/DDBJ databases">
        <authorList>
            <person name="Straub M.-L."/>
            <person name="Souciet J.-L."/>
            <person name="Potier S."/>
            <person name="de Montigny J."/>
        </authorList>
    </citation>
    <scope>NUCLEOTIDE SEQUENCE [GENOMIC DNA]</scope>
    <source>
        <strain>ATCC 28383 / FL100 / VTT C-80102</strain>
    </source>
</reference>
<reference key="2">
    <citation type="journal article" date="1997" name="Nature">
        <title>The nucleotide sequence of Saccharomyces cerevisiae chromosome V.</title>
        <authorList>
            <person name="Dietrich F.S."/>
            <person name="Mulligan J.T."/>
            <person name="Hennessy K.M."/>
            <person name="Yelton M.A."/>
            <person name="Allen E."/>
            <person name="Araujo R."/>
            <person name="Aviles E."/>
            <person name="Berno A."/>
            <person name="Brennan T."/>
            <person name="Carpenter J."/>
            <person name="Chen E."/>
            <person name="Cherry J.M."/>
            <person name="Chung E."/>
            <person name="Duncan M."/>
            <person name="Guzman E."/>
            <person name="Hartzell G."/>
            <person name="Hunicke-Smith S."/>
            <person name="Hyman R.W."/>
            <person name="Kayser A."/>
            <person name="Komp C."/>
            <person name="Lashkari D."/>
            <person name="Lew H."/>
            <person name="Lin D."/>
            <person name="Mosedale D."/>
            <person name="Nakahara K."/>
            <person name="Namath A."/>
            <person name="Norgren R."/>
            <person name="Oefner P."/>
            <person name="Oh C."/>
            <person name="Petel F.X."/>
            <person name="Roberts D."/>
            <person name="Sehl P."/>
            <person name="Schramm S."/>
            <person name="Shogren T."/>
            <person name="Smith V."/>
            <person name="Taylor P."/>
            <person name="Wei Y."/>
            <person name="Botstein D."/>
            <person name="Davis R.W."/>
        </authorList>
    </citation>
    <scope>NUCLEOTIDE SEQUENCE [LARGE SCALE GENOMIC DNA]</scope>
    <source>
        <strain>ATCC 204508 / S288c</strain>
    </source>
</reference>
<reference key="3">
    <citation type="journal article" date="2014" name="G3 (Bethesda)">
        <title>The reference genome sequence of Saccharomyces cerevisiae: Then and now.</title>
        <authorList>
            <person name="Engel S.R."/>
            <person name="Dietrich F.S."/>
            <person name="Fisk D.G."/>
            <person name="Binkley G."/>
            <person name="Balakrishnan R."/>
            <person name="Costanzo M.C."/>
            <person name="Dwight S.S."/>
            <person name="Hitz B.C."/>
            <person name="Karra K."/>
            <person name="Nash R.S."/>
            <person name="Weng S."/>
            <person name="Wong E.D."/>
            <person name="Lloyd P."/>
            <person name="Skrzypek M.S."/>
            <person name="Miyasato S.R."/>
            <person name="Simison M."/>
            <person name="Cherry J.M."/>
        </authorList>
    </citation>
    <scope>GENOME REANNOTATION</scope>
    <source>
        <strain>ATCC 204508 / S288c</strain>
    </source>
</reference>
<keyword id="KW-0472">Membrane</keyword>
<keyword id="KW-0597">Phosphoprotein</keyword>
<keyword id="KW-1185">Reference proteome</keyword>
<keyword id="KW-0812">Transmembrane</keyword>
<keyword id="KW-1133">Transmembrane helix</keyword>
<keyword id="KW-0813">Transport</keyword>
<proteinExistence type="inferred from homology"/>
<protein>
    <recommendedName>
        <fullName>Purine-cytosine permease FCY22</fullName>
        <shortName>PCP FCY22</shortName>
    </recommendedName>
    <alternativeName>
        <fullName>Cytosine/purine transport protein FCY22</fullName>
    </alternativeName>
    <alternativeName>
        <fullName>Fluorocytosine resistance protein 22</fullName>
    </alternativeName>
</protein>
<accession>Q12119</accession>
<accession>D3DLW5</accession>
<sequence length="530" mass="57327">MPEKLAMSMVDIKDAGSELRDLESGALDTKSSAADVYYEGVELHRTNEFIDNKPSFFNRIAAALNAETKGIEPVTEDEKNDDSILNAATIWFSANMVIVAYSVGALGPLVFGLNFGQSVLVIIFFNILGLIPVALFSLFGVELGLRQMILSRYLAGNITARFFSLVNVIACVGWCVLNISVSAQLLNMVNEGSGHNCPIWAGCLIIAGGTVLVTFFGYSVVHAYEKWSWVPNFAAFLVIIAQLSRSGKFKGGEWVGGATTAGGVLSFGSSVFGSAAGWATYAADYTVYMPKTTSKYKIFFSVVAGLAFPLFFTMILGAACGMAALNDPTWKSYYDKNAMGGVIYAILVPNSLNGFGQFCCVLLALSTVANNVPGMYTVALSAQALWAPLAKIPRVVWTMAGNAATLGISIPATYYFDGFMENFMDSIGYYLAIYIAIACSEHFIYRRSFSAYNIDDWDNWEHLPIGIAGTAALIAGAFGVALGMCQTYWVGEISRLIGEYGGDIGFELGGSWAFIIYNIVRPLELKYFGR</sequence>
<name>FCY22_YEAST</name>